<accession>A7FY19</accession>
<name>RUVB_CLOB1</name>
<evidence type="ECO:0000255" key="1">
    <source>
        <dbReference type="HAMAP-Rule" id="MF_00016"/>
    </source>
</evidence>
<organism>
    <name type="scientific">Clostridium botulinum (strain ATCC 19397 / Type A)</name>
    <dbReference type="NCBI Taxonomy" id="441770"/>
    <lineage>
        <taxon>Bacteria</taxon>
        <taxon>Bacillati</taxon>
        <taxon>Bacillota</taxon>
        <taxon>Clostridia</taxon>
        <taxon>Eubacteriales</taxon>
        <taxon>Clostridiaceae</taxon>
        <taxon>Clostridium</taxon>
    </lineage>
</organism>
<keyword id="KW-0067">ATP-binding</keyword>
<keyword id="KW-0963">Cytoplasm</keyword>
<keyword id="KW-0227">DNA damage</keyword>
<keyword id="KW-0233">DNA recombination</keyword>
<keyword id="KW-0234">DNA repair</keyword>
<keyword id="KW-0238">DNA-binding</keyword>
<keyword id="KW-0378">Hydrolase</keyword>
<keyword id="KW-0547">Nucleotide-binding</keyword>
<dbReference type="EC" id="3.6.4.-" evidence="1"/>
<dbReference type="EMBL" id="CP000726">
    <property type="protein sequence ID" value="ABS35758.1"/>
    <property type="molecule type" value="Genomic_DNA"/>
</dbReference>
<dbReference type="RefSeq" id="WP_012048088.1">
    <property type="nucleotide sequence ID" value="NC_009697.1"/>
</dbReference>
<dbReference type="SMR" id="A7FY19"/>
<dbReference type="GeneID" id="5187121"/>
<dbReference type="KEGG" id="cba:CLB_3099"/>
<dbReference type="HOGENOM" id="CLU_055599_1_0_9"/>
<dbReference type="GO" id="GO:0005737">
    <property type="term" value="C:cytoplasm"/>
    <property type="evidence" value="ECO:0007669"/>
    <property type="project" value="UniProtKB-SubCell"/>
</dbReference>
<dbReference type="GO" id="GO:0048476">
    <property type="term" value="C:Holliday junction resolvase complex"/>
    <property type="evidence" value="ECO:0007669"/>
    <property type="project" value="UniProtKB-UniRule"/>
</dbReference>
<dbReference type="GO" id="GO:0005524">
    <property type="term" value="F:ATP binding"/>
    <property type="evidence" value="ECO:0007669"/>
    <property type="project" value="UniProtKB-UniRule"/>
</dbReference>
<dbReference type="GO" id="GO:0016887">
    <property type="term" value="F:ATP hydrolysis activity"/>
    <property type="evidence" value="ECO:0007669"/>
    <property type="project" value="InterPro"/>
</dbReference>
<dbReference type="GO" id="GO:0000400">
    <property type="term" value="F:four-way junction DNA binding"/>
    <property type="evidence" value="ECO:0007669"/>
    <property type="project" value="UniProtKB-UniRule"/>
</dbReference>
<dbReference type="GO" id="GO:0009378">
    <property type="term" value="F:four-way junction helicase activity"/>
    <property type="evidence" value="ECO:0007669"/>
    <property type="project" value="InterPro"/>
</dbReference>
<dbReference type="GO" id="GO:0006310">
    <property type="term" value="P:DNA recombination"/>
    <property type="evidence" value="ECO:0007669"/>
    <property type="project" value="UniProtKB-UniRule"/>
</dbReference>
<dbReference type="GO" id="GO:0006281">
    <property type="term" value="P:DNA repair"/>
    <property type="evidence" value="ECO:0007669"/>
    <property type="project" value="UniProtKB-UniRule"/>
</dbReference>
<dbReference type="CDD" id="cd00009">
    <property type="entry name" value="AAA"/>
    <property type="match status" value="1"/>
</dbReference>
<dbReference type="Gene3D" id="1.10.8.60">
    <property type="match status" value="1"/>
</dbReference>
<dbReference type="Gene3D" id="3.40.50.300">
    <property type="entry name" value="P-loop containing nucleotide triphosphate hydrolases"/>
    <property type="match status" value="1"/>
</dbReference>
<dbReference type="Gene3D" id="1.10.10.10">
    <property type="entry name" value="Winged helix-like DNA-binding domain superfamily/Winged helix DNA-binding domain"/>
    <property type="match status" value="1"/>
</dbReference>
<dbReference type="HAMAP" id="MF_00016">
    <property type="entry name" value="DNA_HJ_migration_RuvB"/>
    <property type="match status" value="1"/>
</dbReference>
<dbReference type="InterPro" id="IPR003593">
    <property type="entry name" value="AAA+_ATPase"/>
</dbReference>
<dbReference type="InterPro" id="IPR041445">
    <property type="entry name" value="AAA_lid_4"/>
</dbReference>
<dbReference type="InterPro" id="IPR004605">
    <property type="entry name" value="DNA_helicase_Holl-junc_RuvB"/>
</dbReference>
<dbReference type="InterPro" id="IPR027417">
    <property type="entry name" value="P-loop_NTPase"/>
</dbReference>
<dbReference type="InterPro" id="IPR008824">
    <property type="entry name" value="RuvB-like_N"/>
</dbReference>
<dbReference type="InterPro" id="IPR008823">
    <property type="entry name" value="RuvB_C"/>
</dbReference>
<dbReference type="InterPro" id="IPR036388">
    <property type="entry name" value="WH-like_DNA-bd_sf"/>
</dbReference>
<dbReference type="InterPro" id="IPR036390">
    <property type="entry name" value="WH_DNA-bd_sf"/>
</dbReference>
<dbReference type="NCBIfam" id="NF000868">
    <property type="entry name" value="PRK00080.1"/>
    <property type="match status" value="1"/>
</dbReference>
<dbReference type="NCBIfam" id="TIGR00635">
    <property type="entry name" value="ruvB"/>
    <property type="match status" value="1"/>
</dbReference>
<dbReference type="PANTHER" id="PTHR42848">
    <property type="match status" value="1"/>
</dbReference>
<dbReference type="PANTHER" id="PTHR42848:SF1">
    <property type="entry name" value="HOLLIDAY JUNCTION BRANCH MIGRATION COMPLEX SUBUNIT RUVB"/>
    <property type="match status" value="1"/>
</dbReference>
<dbReference type="Pfam" id="PF17864">
    <property type="entry name" value="AAA_lid_4"/>
    <property type="match status" value="1"/>
</dbReference>
<dbReference type="Pfam" id="PF05491">
    <property type="entry name" value="RuvB_C"/>
    <property type="match status" value="1"/>
</dbReference>
<dbReference type="Pfam" id="PF05496">
    <property type="entry name" value="RuvB_N"/>
    <property type="match status" value="1"/>
</dbReference>
<dbReference type="SMART" id="SM00382">
    <property type="entry name" value="AAA"/>
    <property type="match status" value="1"/>
</dbReference>
<dbReference type="SUPFAM" id="SSF52540">
    <property type="entry name" value="P-loop containing nucleoside triphosphate hydrolases"/>
    <property type="match status" value="1"/>
</dbReference>
<dbReference type="SUPFAM" id="SSF46785">
    <property type="entry name" value="Winged helix' DNA-binding domain"/>
    <property type="match status" value="1"/>
</dbReference>
<sequence length="342" mass="38400">MENRMVTPFDVEDDREQYSLRPTTLKEYIGQKKVKANLDIFIKAAKKRNESLDHVLFYGPPGLGKTTLANIIANEMTGNLKVTSGPAIEKAGDLAAILTSLTDYDVLFIDEIHRLNRSIEEILYPAMEDYALDIVIGKGAAAKSIRLDLPKFTLIGATTRVGLLTSPLRDRFGMLCAMEFYTDEELMEIVVRSAAILNVNICREAAFEIGKRSRGTPRIANRLLKRVRDYCDVKHDGDIDLQGAKAALDLLEVDKEGLDKIDNKILEAIIFNFKGGPVGLETLAYFIGEELDTIEDVYEPYLIQKGFIMRTPRGRVASEKAYNHFGVTKKEEKDNQVSIFNK</sequence>
<comment type="function">
    <text evidence="1">The RuvA-RuvB-RuvC complex processes Holliday junction (HJ) DNA during genetic recombination and DNA repair, while the RuvA-RuvB complex plays an important role in the rescue of blocked DNA replication forks via replication fork reversal (RFR). RuvA specifically binds to HJ cruciform DNA, conferring on it an open structure. The RuvB hexamer acts as an ATP-dependent pump, pulling dsDNA into and through the RuvAB complex. RuvB forms 2 homohexamers on either side of HJ DNA bound by 1 or 2 RuvA tetramers; 4 subunits per hexamer contact DNA at a time. Coordinated motions by a converter formed by DNA-disengaged RuvB subunits stimulates ATP hydrolysis and nucleotide exchange. Immobilization of the converter enables RuvB to convert the ATP-contained energy into a lever motion, pulling 2 nucleotides of DNA out of the RuvA tetramer per ATP hydrolyzed, thus driving DNA branch migration. The RuvB motors rotate together with the DNA substrate, which together with the progressing nucleotide cycle form the mechanistic basis for DNA recombination by continuous HJ branch migration. Branch migration allows RuvC to scan DNA until it finds its consensus sequence, where it cleaves and resolves cruciform DNA.</text>
</comment>
<comment type="catalytic activity">
    <reaction evidence="1">
        <text>ATP + H2O = ADP + phosphate + H(+)</text>
        <dbReference type="Rhea" id="RHEA:13065"/>
        <dbReference type="ChEBI" id="CHEBI:15377"/>
        <dbReference type="ChEBI" id="CHEBI:15378"/>
        <dbReference type="ChEBI" id="CHEBI:30616"/>
        <dbReference type="ChEBI" id="CHEBI:43474"/>
        <dbReference type="ChEBI" id="CHEBI:456216"/>
    </reaction>
</comment>
<comment type="subunit">
    <text evidence="1">Homohexamer. Forms an RuvA(8)-RuvB(12)-Holliday junction (HJ) complex. HJ DNA is sandwiched between 2 RuvA tetramers; dsDNA enters through RuvA and exits via RuvB. An RuvB hexamer assembles on each DNA strand where it exits the tetramer. Each RuvB hexamer is contacted by two RuvA subunits (via domain III) on 2 adjacent RuvB subunits; this complex drives branch migration. In the full resolvosome a probable DNA-RuvA(4)-RuvB(12)-RuvC(2) complex forms which resolves the HJ.</text>
</comment>
<comment type="subcellular location">
    <subcellularLocation>
        <location evidence="1">Cytoplasm</location>
    </subcellularLocation>
</comment>
<comment type="domain">
    <text evidence="1">Has 3 domains, the large (RuvB-L) and small ATPase (RuvB-S) domains and the C-terminal head (RuvB-H) domain. The head domain binds DNA, while the ATPase domains jointly bind ATP, ADP or are empty depending on the state of the subunit in the translocation cycle. During a single DNA translocation step the structure of each domain remains the same, but their relative positions change.</text>
</comment>
<comment type="similarity">
    <text evidence="1">Belongs to the RuvB family.</text>
</comment>
<protein>
    <recommendedName>
        <fullName evidence="1">Holliday junction branch migration complex subunit RuvB</fullName>
        <ecNumber evidence="1">3.6.4.-</ecNumber>
    </recommendedName>
</protein>
<feature type="chain" id="PRO_1000001389" description="Holliday junction branch migration complex subunit RuvB">
    <location>
        <begin position="1"/>
        <end position="342"/>
    </location>
</feature>
<feature type="region of interest" description="Large ATPase domain (RuvB-L)" evidence="1">
    <location>
        <begin position="1"/>
        <end position="181"/>
    </location>
</feature>
<feature type="region of interest" description="Small ATPAse domain (RuvB-S)" evidence="1">
    <location>
        <begin position="182"/>
        <end position="252"/>
    </location>
</feature>
<feature type="region of interest" description="Head domain (RuvB-H)" evidence="1">
    <location>
        <begin position="255"/>
        <end position="342"/>
    </location>
</feature>
<feature type="binding site" evidence="1">
    <location>
        <position position="20"/>
    </location>
    <ligand>
        <name>ATP</name>
        <dbReference type="ChEBI" id="CHEBI:30616"/>
    </ligand>
</feature>
<feature type="binding site" evidence="1">
    <location>
        <position position="21"/>
    </location>
    <ligand>
        <name>ATP</name>
        <dbReference type="ChEBI" id="CHEBI:30616"/>
    </ligand>
</feature>
<feature type="binding site" evidence="1">
    <location>
        <position position="62"/>
    </location>
    <ligand>
        <name>ATP</name>
        <dbReference type="ChEBI" id="CHEBI:30616"/>
    </ligand>
</feature>
<feature type="binding site" evidence="1">
    <location>
        <position position="65"/>
    </location>
    <ligand>
        <name>ATP</name>
        <dbReference type="ChEBI" id="CHEBI:30616"/>
    </ligand>
</feature>
<feature type="binding site" evidence="1">
    <location>
        <position position="66"/>
    </location>
    <ligand>
        <name>ATP</name>
        <dbReference type="ChEBI" id="CHEBI:30616"/>
    </ligand>
</feature>
<feature type="binding site" evidence="1">
    <location>
        <position position="66"/>
    </location>
    <ligand>
        <name>Mg(2+)</name>
        <dbReference type="ChEBI" id="CHEBI:18420"/>
    </ligand>
</feature>
<feature type="binding site" evidence="1">
    <location>
        <position position="67"/>
    </location>
    <ligand>
        <name>ATP</name>
        <dbReference type="ChEBI" id="CHEBI:30616"/>
    </ligand>
</feature>
<feature type="binding site" evidence="1">
    <location>
        <begin position="128"/>
        <end position="130"/>
    </location>
    <ligand>
        <name>ATP</name>
        <dbReference type="ChEBI" id="CHEBI:30616"/>
    </ligand>
</feature>
<feature type="binding site" evidence="1">
    <location>
        <position position="171"/>
    </location>
    <ligand>
        <name>ATP</name>
        <dbReference type="ChEBI" id="CHEBI:30616"/>
    </ligand>
</feature>
<feature type="binding site" evidence="1">
    <location>
        <position position="181"/>
    </location>
    <ligand>
        <name>ATP</name>
        <dbReference type="ChEBI" id="CHEBI:30616"/>
    </ligand>
</feature>
<feature type="binding site" evidence="1">
    <location>
        <position position="218"/>
    </location>
    <ligand>
        <name>ATP</name>
        <dbReference type="ChEBI" id="CHEBI:30616"/>
    </ligand>
</feature>
<feature type="binding site" evidence="1">
    <location>
        <position position="310"/>
    </location>
    <ligand>
        <name>DNA</name>
        <dbReference type="ChEBI" id="CHEBI:16991"/>
    </ligand>
</feature>
<feature type="binding site" evidence="1">
    <location>
        <position position="315"/>
    </location>
    <ligand>
        <name>DNA</name>
        <dbReference type="ChEBI" id="CHEBI:16991"/>
    </ligand>
</feature>
<proteinExistence type="inferred from homology"/>
<reference key="1">
    <citation type="journal article" date="2007" name="PLoS ONE">
        <title>Analysis of the neurotoxin complex genes in Clostridium botulinum A1-A4 and B1 strains: BoNT/A3, /Ba4 and /B1 clusters are located within plasmids.</title>
        <authorList>
            <person name="Smith T.J."/>
            <person name="Hill K.K."/>
            <person name="Foley B.T."/>
            <person name="Detter J.C."/>
            <person name="Munk A.C."/>
            <person name="Bruce D.C."/>
            <person name="Doggett N.A."/>
            <person name="Smith L.A."/>
            <person name="Marks J.D."/>
            <person name="Xie G."/>
            <person name="Brettin T.S."/>
        </authorList>
    </citation>
    <scope>NUCLEOTIDE SEQUENCE [LARGE SCALE GENOMIC DNA]</scope>
    <source>
        <strain>ATCC 19397 / Type A</strain>
    </source>
</reference>
<gene>
    <name evidence="1" type="primary">ruvB</name>
    <name type="ordered locus">CLB_3099</name>
</gene>